<comment type="function">
    <text evidence="1">Produces ATP from ADP in the presence of a proton gradient across the membrane. The gamma chain is believed to be important in regulating ATPase activity and the flow of protons through the CF(0) complex.</text>
</comment>
<comment type="subunit">
    <text evidence="1">F-type ATPases have 2 components, CF(1) - the catalytic core - and CF(0) - the membrane proton channel. CF(1) has five subunits: alpha(3), beta(3), gamma(1), delta(1), epsilon(1). CF(0) has three main subunits: a, b and c.</text>
</comment>
<comment type="subcellular location">
    <subcellularLocation>
        <location evidence="1">Cell inner membrane</location>
        <topology evidence="1">Peripheral membrane protein</topology>
    </subcellularLocation>
</comment>
<comment type="similarity">
    <text evidence="1">Belongs to the ATPase gamma chain family.</text>
</comment>
<sequence length="286" mass="31438">MAGAKEIKTKIASVKNTQKITSAMEMVAASKMRRAQERMAASRPYAESMRKVIGHVAQGSLEYKHPYLEVREAKRVGYIVVATDRGLCGGLNVNLFKKVIADVKSWKAQGAEFEFCPIGARSVQFFKNFGGQVSAHASGLGDAPKLADLIGTVGVMLEAYNEGKLDRLYVVFNKFVNTMTQTPVIEQLLPLPKSEDDETAHRWDYIYEPDPKALLDTLLVRYVESQVYQGVVENIASEQAARMVAMKSATDNAGELINDLQLVYNKARQAAITQELSEIVSGASAV</sequence>
<proteinExistence type="inferred from homology"/>
<gene>
    <name evidence="1" type="primary">atpG</name>
    <name type="ordered locus">Sbal223_4311</name>
</gene>
<name>ATPG_SHEB2</name>
<protein>
    <recommendedName>
        <fullName evidence="1">ATP synthase gamma chain</fullName>
    </recommendedName>
    <alternativeName>
        <fullName evidence="1">ATP synthase F1 sector gamma subunit</fullName>
    </alternativeName>
    <alternativeName>
        <fullName evidence="1">F-ATPase gamma subunit</fullName>
    </alternativeName>
</protein>
<keyword id="KW-0066">ATP synthesis</keyword>
<keyword id="KW-0997">Cell inner membrane</keyword>
<keyword id="KW-1003">Cell membrane</keyword>
<keyword id="KW-0139">CF(1)</keyword>
<keyword id="KW-0375">Hydrogen ion transport</keyword>
<keyword id="KW-0406">Ion transport</keyword>
<keyword id="KW-0472">Membrane</keyword>
<keyword id="KW-0813">Transport</keyword>
<evidence type="ECO:0000255" key="1">
    <source>
        <dbReference type="HAMAP-Rule" id="MF_00815"/>
    </source>
</evidence>
<accession>B8EDV1</accession>
<dbReference type="EMBL" id="CP001252">
    <property type="protein sequence ID" value="ACK48777.1"/>
    <property type="molecule type" value="Genomic_DNA"/>
</dbReference>
<dbReference type="RefSeq" id="WP_006084762.1">
    <property type="nucleotide sequence ID" value="NC_011663.1"/>
</dbReference>
<dbReference type="SMR" id="B8EDV1"/>
<dbReference type="GeneID" id="11774461"/>
<dbReference type="KEGG" id="sbp:Sbal223_4311"/>
<dbReference type="HOGENOM" id="CLU_050669_0_1_6"/>
<dbReference type="Proteomes" id="UP000002507">
    <property type="component" value="Chromosome"/>
</dbReference>
<dbReference type="GO" id="GO:0005886">
    <property type="term" value="C:plasma membrane"/>
    <property type="evidence" value="ECO:0007669"/>
    <property type="project" value="UniProtKB-SubCell"/>
</dbReference>
<dbReference type="GO" id="GO:0045259">
    <property type="term" value="C:proton-transporting ATP synthase complex"/>
    <property type="evidence" value="ECO:0007669"/>
    <property type="project" value="UniProtKB-KW"/>
</dbReference>
<dbReference type="GO" id="GO:0005524">
    <property type="term" value="F:ATP binding"/>
    <property type="evidence" value="ECO:0007669"/>
    <property type="project" value="UniProtKB-UniRule"/>
</dbReference>
<dbReference type="GO" id="GO:0046933">
    <property type="term" value="F:proton-transporting ATP synthase activity, rotational mechanism"/>
    <property type="evidence" value="ECO:0007669"/>
    <property type="project" value="UniProtKB-UniRule"/>
</dbReference>
<dbReference type="GO" id="GO:0042777">
    <property type="term" value="P:proton motive force-driven plasma membrane ATP synthesis"/>
    <property type="evidence" value="ECO:0007669"/>
    <property type="project" value="UniProtKB-UniRule"/>
</dbReference>
<dbReference type="CDD" id="cd12151">
    <property type="entry name" value="F1-ATPase_gamma"/>
    <property type="match status" value="1"/>
</dbReference>
<dbReference type="FunFam" id="1.10.287.80:FF:000005">
    <property type="entry name" value="ATP synthase gamma chain"/>
    <property type="match status" value="2"/>
</dbReference>
<dbReference type="FunFam" id="3.40.1380.10:FF:000001">
    <property type="entry name" value="ATP synthase gamma chain"/>
    <property type="match status" value="1"/>
</dbReference>
<dbReference type="Gene3D" id="3.40.1380.10">
    <property type="match status" value="1"/>
</dbReference>
<dbReference type="Gene3D" id="1.10.287.80">
    <property type="entry name" value="ATP synthase, gamma subunit, helix hairpin domain"/>
    <property type="match status" value="2"/>
</dbReference>
<dbReference type="HAMAP" id="MF_00815">
    <property type="entry name" value="ATP_synth_gamma_bact"/>
    <property type="match status" value="1"/>
</dbReference>
<dbReference type="InterPro" id="IPR035968">
    <property type="entry name" value="ATP_synth_F1_ATPase_gsu"/>
</dbReference>
<dbReference type="InterPro" id="IPR000131">
    <property type="entry name" value="ATP_synth_F1_gsu"/>
</dbReference>
<dbReference type="InterPro" id="IPR023632">
    <property type="entry name" value="ATP_synth_F1_gsu_CS"/>
</dbReference>
<dbReference type="NCBIfam" id="TIGR01146">
    <property type="entry name" value="ATPsyn_F1gamma"/>
    <property type="match status" value="1"/>
</dbReference>
<dbReference type="NCBIfam" id="NF004144">
    <property type="entry name" value="PRK05621.1-1"/>
    <property type="match status" value="1"/>
</dbReference>
<dbReference type="PANTHER" id="PTHR11693">
    <property type="entry name" value="ATP SYNTHASE GAMMA CHAIN"/>
    <property type="match status" value="1"/>
</dbReference>
<dbReference type="PANTHER" id="PTHR11693:SF22">
    <property type="entry name" value="ATP SYNTHASE SUBUNIT GAMMA, MITOCHONDRIAL"/>
    <property type="match status" value="1"/>
</dbReference>
<dbReference type="Pfam" id="PF00231">
    <property type="entry name" value="ATP-synt"/>
    <property type="match status" value="1"/>
</dbReference>
<dbReference type="PRINTS" id="PR00126">
    <property type="entry name" value="ATPASEGAMMA"/>
</dbReference>
<dbReference type="SUPFAM" id="SSF52943">
    <property type="entry name" value="ATP synthase (F1-ATPase), gamma subunit"/>
    <property type="match status" value="1"/>
</dbReference>
<dbReference type="PROSITE" id="PS00153">
    <property type="entry name" value="ATPASE_GAMMA"/>
    <property type="match status" value="1"/>
</dbReference>
<reference key="1">
    <citation type="submission" date="2008-12" db="EMBL/GenBank/DDBJ databases">
        <title>Complete sequence of chromosome of Shewanella baltica OS223.</title>
        <authorList>
            <consortium name="US DOE Joint Genome Institute"/>
            <person name="Lucas S."/>
            <person name="Copeland A."/>
            <person name="Lapidus A."/>
            <person name="Glavina del Rio T."/>
            <person name="Dalin E."/>
            <person name="Tice H."/>
            <person name="Bruce D."/>
            <person name="Goodwin L."/>
            <person name="Pitluck S."/>
            <person name="Chertkov O."/>
            <person name="Meincke L."/>
            <person name="Brettin T."/>
            <person name="Detter J.C."/>
            <person name="Han C."/>
            <person name="Kuske C.R."/>
            <person name="Larimer F."/>
            <person name="Land M."/>
            <person name="Hauser L."/>
            <person name="Kyrpides N."/>
            <person name="Ovchinnikova G."/>
            <person name="Brettar I."/>
            <person name="Rodrigues J."/>
            <person name="Konstantinidis K."/>
            <person name="Tiedje J."/>
        </authorList>
    </citation>
    <scope>NUCLEOTIDE SEQUENCE [LARGE SCALE GENOMIC DNA]</scope>
    <source>
        <strain>OS223</strain>
    </source>
</reference>
<organism>
    <name type="scientific">Shewanella baltica (strain OS223)</name>
    <dbReference type="NCBI Taxonomy" id="407976"/>
    <lineage>
        <taxon>Bacteria</taxon>
        <taxon>Pseudomonadati</taxon>
        <taxon>Pseudomonadota</taxon>
        <taxon>Gammaproteobacteria</taxon>
        <taxon>Alteromonadales</taxon>
        <taxon>Shewanellaceae</taxon>
        <taxon>Shewanella</taxon>
    </lineage>
</organism>
<feature type="chain" id="PRO_1000148636" description="ATP synthase gamma chain">
    <location>
        <begin position="1"/>
        <end position="286"/>
    </location>
</feature>